<name>SYY_ESCF3</name>
<comment type="function">
    <text evidence="1">Catalyzes the attachment of tyrosine to tRNA(Tyr) in a two-step reaction: tyrosine is first activated by ATP to form Tyr-AMP and then transferred to the acceptor end of tRNA(Tyr).</text>
</comment>
<comment type="catalytic activity">
    <reaction evidence="1">
        <text>tRNA(Tyr) + L-tyrosine + ATP = L-tyrosyl-tRNA(Tyr) + AMP + diphosphate + H(+)</text>
        <dbReference type="Rhea" id="RHEA:10220"/>
        <dbReference type="Rhea" id="RHEA-COMP:9706"/>
        <dbReference type="Rhea" id="RHEA-COMP:9707"/>
        <dbReference type="ChEBI" id="CHEBI:15378"/>
        <dbReference type="ChEBI" id="CHEBI:30616"/>
        <dbReference type="ChEBI" id="CHEBI:33019"/>
        <dbReference type="ChEBI" id="CHEBI:58315"/>
        <dbReference type="ChEBI" id="CHEBI:78442"/>
        <dbReference type="ChEBI" id="CHEBI:78536"/>
        <dbReference type="ChEBI" id="CHEBI:456215"/>
        <dbReference type="EC" id="6.1.1.1"/>
    </reaction>
</comment>
<comment type="subunit">
    <text evidence="1">Homodimer.</text>
</comment>
<comment type="subcellular location">
    <subcellularLocation>
        <location evidence="1">Cytoplasm</location>
    </subcellularLocation>
</comment>
<comment type="similarity">
    <text evidence="1">Belongs to the class-I aminoacyl-tRNA synthetase family. TyrS type 1 subfamily.</text>
</comment>
<feature type="chain" id="PRO_1000189299" description="Tyrosine--tRNA ligase">
    <location>
        <begin position="1"/>
        <end position="424"/>
    </location>
</feature>
<feature type="domain" description="S4 RNA-binding" evidence="1">
    <location>
        <begin position="357"/>
        <end position="414"/>
    </location>
</feature>
<feature type="short sequence motif" description="'HIGH' region">
    <location>
        <begin position="42"/>
        <end position="51"/>
    </location>
</feature>
<feature type="short sequence motif" description="'KMSKS' region">
    <location>
        <begin position="235"/>
        <end position="239"/>
    </location>
</feature>
<feature type="binding site" evidence="1">
    <location>
        <position position="37"/>
    </location>
    <ligand>
        <name>L-tyrosine</name>
        <dbReference type="ChEBI" id="CHEBI:58315"/>
    </ligand>
</feature>
<feature type="binding site" evidence="1">
    <location>
        <position position="175"/>
    </location>
    <ligand>
        <name>L-tyrosine</name>
        <dbReference type="ChEBI" id="CHEBI:58315"/>
    </ligand>
</feature>
<feature type="binding site" evidence="1">
    <location>
        <position position="179"/>
    </location>
    <ligand>
        <name>L-tyrosine</name>
        <dbReference type="ChEBI" id="CHEBI:58315"/>
    </ligand>
</feature>
<feature type="binding site" evidence="1">
    <location>
        <position position="238"/>
    </location>
    <ligand>
        <name>ATP</name>
        <dbReference type="ChEBI" id="CHEBI:30616"/>
    </ligand>
</feature>
<feature type="modified residue" description="N6-acetyllysine" evidence="1">
    <location>
        <position position="144"/>
    </location>
</feature>
<gene>
    <name evidence="1" type="primary">tyrS</name>
    <name type="ordered locus">EFER_1406</name>
</gene>
<dbReference type="EC" id="6.1.1.1" evidence="1"/>
<dbReference type="EMBL" id="CU928158">
    <property type="protein sequence ID" value="CAQ88926.1"/>
    <property type="molecule type" value="Genomic_DNA"/>
</dbReference>
<dbReference type="RefSeq" id="WP_002431557.1">
    <property type="nucleotide sequence ID" value="NC_011740.1"/>
</dbReference>
<dbReference type="SMR" id="B7LQN3"/>
<dbReference type="GeneID" id="75057548"/>
<dbReference type="KEGG" id="efe:EFER_1406"/>
<dbReference type="HOGENOM" id="CLU_024003_0_3_6"/>
<dbReference type="OrthoDB" id="9804243at2"/>
<dbReference type="Proteomes" id="UP000000745">
    <property type="component" value="Chromosome"/>
</dbReference>
<dbReference type="GO" id="GO:0005829">
    <property type="term" value="C:cytosol"/>
    <property type="evidence" value="ECO:0007669"/>
    <property type="project" value="TreeGrafter"/>
</dbReference>
<dbReference type="GO" id="GO:0005524">
    <property type="term" value="F:ATP binding"/>
    <property type="evidence" value="ECO:0007669"/>
    <property type="project" value="UniProtKB-UniRule"/>
</dbReference>
<dbReference type="GO" id="GO:0003723">
    <property type="term" value="F:RNA binding"/>
    <property type="evidence" value="ECO:0007669"/>
    <property type="project" value="UniProtKB-KW"/>
</dbReference>
<dbReference type="GO" id="GO:0004831">
    <property type="term" value="F:tyrosine-tRNA ligase activity"/>
    <property type="evidence" value="ECO:0007669"/>
    <property type="project" value="UniProtKB-UniRule"/>
</dbReference>
<dbReference type="GO" id="GO:0006437">
    <property type="term" value="P:tyrosyl-tRNA aminoacylation"/>
    <property type="evidence" value="ECO:0007669"/>
    <property type="project" value="UniProtKB-UniRule"/>
</dbReference>
<dbReference type="CDD" id="cd00165">
    <property type="entry name" value="S4"/>
    <property type="match status" value="1"/>
</dbReference>
<dbReference type="CDD" id="cd00805">
    <property type="entry name" value="TyrRS_core"/>
    <property type="match status" value="1"/>
</dbReference>
<dbReference type="FunFam" id="1.10.240.10:FF:000001">
    <property type="entry name" value="Tyrosine--tRNA ligase"/>
    <property type="match status" value="1"/>
</dbReference>
<dbReference type="FunFam" id="3.10.290.10:FF:000007">
    <property type="entry name" value="Tyrosine--tRNA ligase"/>
    <property type="match status" value="1"/>
</dbReference>
<dbReference type="FunFam" id="3.40.50.620:FF:000008">
    <property type="entry name" value="Tyrosine--tRNA ligase"/>
    <property type="match status" value="1"/>
</dbReference>
<dbReference type="Gene3D" id="3.40.50.620">
    <property type="entry name" value="HUPs"/>
    <property type="match status" value="1"/>
</dbReference>
<dbReference type="Gene3D" id="3.10.290.10">
    <property type="entry name" value="RNA-binding S4 domain"/>
    <property type="match status" value="1"/>
</dbReference>
<dbReference type="Gene3D" id="1.10.240.10">
    <property type="entry name" value="Tyrosyl-Transfer RNA Synthetase"/>
    <property type="match status" value="1"/>
</dbReference>
<dbReference type="HAMAP" id="MF_02006">
    <property type="entry name" value="Tyr_tRNA_synth_type1"/>
    <property type="match status" value="1"/>
</dbReference>
<dbReference type="InterPro" id="IPR001412">
    <property type="entry name" value="aa-tRNA-synth_I_CS"/>
</dbReference>
<dbReference type="InterPro" id="IPR002305">
    <property type="entry name" value="aa-tRNA-synth_Ic"/>
</dbReference>
<dbReference type="InterPro" id="IPR014729">
    <property type="entry name" value="Rossmann-like_a/b/a_fold"/>
</dbReference>
<dbReference type="InterPro" id="IPR002942">
    <property type="entry name" value="S4_RNA-bd"/>
</dbReference>
<dbReference type="InterPro" id="IPR036986">
    <property type="entry name" value="S4_RNA-bd_sf"/>
</dbReference>
<dbReference type="InterPro" id="IPR054608">
    <property type="entry name" value="SYY-like_C"/>
</dbReference>
<dbReference type="InterPro" id="IPR002307">
    <property type="entry name" value="Tyr-tRNA-ligase"/>
</dbReference>
<dbReference type="InterPro" id="IPR024088">
    <property type="entry name" value="Tyr-tRNA-ligase_bac-type"/>
</dbReference>
<dbReference type="InterPro" id="IPR024107">
    <property type="entry name" value="Tyr-tRNA-ligase_bac_1"/>
</dbReference>
<dbReference type="NCBIfam" id="TIGR00234">
    <property type="entry name" value="tyrS"/>
    <property type="match status" value="1"/>
</dbReference>
<dbReference type="PANTHER" id="PTHR11766:SF0">
    <property type="entry name" value="TYROSINE--TRNA LIGASE, MITOCHONDRIAL"/>
    <property type="match status" value="1"/>
</dbReference>
<dbReference type="PANTHER" id="PTHR11766">
    <property type="entry name" value="TYROSYL-TRNA SYNTHETASE"/>
    <property type="match status" value="1"/>
</dbReference>
<dbReference type="Pfam" id="PF22421">
    <property type="entry name" value="SYY_C-terminal"/>
    <property type="match status" value="1"/>
</dbReference>
<dbReference type="Pfam" id="PF00579">
    <property type="entry name" value="tRNA-synt_1b"/>
    <property type="match status" value="1"/>
</dbReference>
<dbReference type="PRINTS" id="PR01040">
    <property type="entry name" value="TRNASYNTHTYR"/>
</dbReference>
<dbReference type="SMART" id="SM00363">
    <property type="entry name" value="S4"/>
    <property type="match status" value="1"/>
</dbReference>
<dbReference type="SUPFAM" id="SSF55174">
    <property type="entry name" value="Alpha-L RNA-binding motif"/>
    <property type="match status" value="1"/>
</dbReference>
<dbReference type="SUPFAM" id="SSF52374">
    <property type="entry name" value="Nucleotidylyl transferase"/>
    <property type="match status" value="1"/>
</dbReference>
<dbReference type="PROSITE" id="PS00178">
    <property type="entry name" value="AA_TRNA_LIGASE_I"/>
    <property type="match status" value="1"/>
</dbReference>
<dbReference type="PROSITE" id="PS50889">
    <property type="entry name" value="S4"/>
    <property type="match status" value="1"/>
</dbReference>
<protein>
    <recommendedName>
        <fullName evidence="1">Tyrosine--tRNA ligase</fullName>
        <ecNumber evidence="1">6.1.1.1</ecNumber>
    </recommendedName>
    <alternativeName>
        <fullName evidence="1">Tyrosyl-tRNA synthetase</fullName>
        <shortName evidence="1">TyrRS</shortName>
    </alternativeName>
</protein>
<reference key="1">
    <citation type="journal article" date="2009" name="PLoS Genet.">
        <title>Organised genome dynamics in the Escherichia coli species results in highly diverse adaptive paths.</title>
        <authorList>
            <person name="Touchon M."/>
            <person name="Hoede C."/>
            <person name="Tenaillon O."/>
            <person name="Barbe V."/>
            <person name="Baeriswyl S."/>
            <person name="Bidet P."/>
            <person name="Bingen E."/>
            <person name="Bonacorsi S."/>
            <person name="Bouchier C."/>
            <person name="Bouvet O."/>
            <person name="Calteau A."/>
            <person name="Chiapello H."/>
            <person name="Clermont O."/>
            <person name="Cruveiller S."/>
            <person name="Danchin A."/>
            <person name="Diard M."/>
            <person name="Dossat C."/>
            <person name="Karoui M.E."/>
            <person name="Frapy E."/>
            <person name="Garry L."/>
            <person name="Ghigo J.M."/>
            <person name="Gilles A.M."/>
            <person name="Johnson J."/>
            <person name="Le Bouguenec C."/>
            <person name="Lescat M."/>
            <person name="Mangenot S."/>
            <person name="Martinez-Jehanne V."/>
            <person name="Matic I."/>
            <person name="Nassif X."/>
            <person name="Oztas S."/>
            <person name="Petit M.A."/>
            <person name="Pichon C."/>
            <person name="Rouy Z."/>
            <person name="Ruf C.S."/>
            <person name="Schneider D."/>
            <person name="Tourret J."/>
            <person name="Vacherie B."/>
            <person name="Vallenet D."/>
            <person name="Medigue C."/>
            <person name="Rocha E.P.C."/>
            <person name="Denamur E."/>
        </authorList>
    </citation>
    <scope>NUCLEOTIDE SEQUENCE [LARGE SCALE GENOMIC DNA]</scope>
    <source>
        <strain>ATCC 35469 / DSM 13698 / BCRC 15582 / CCUG 18766 / IAM 14443 / JCM 21226 / LMG 7866 / NBRC 102419 / NCTC 12128 / CDC 0568-73</strain>
    </source>
</reference>
<keyword id="KW-0007">Acetylation</keyword>
<keyword id="KW-0030">Aminoacyl-tRNA synthetase</keyword>
<keyword id="KW-0067">ATP-binding</keyword>
<keyword id="KW-0963">Cytoplasm</keyword>
<keyword id="KW-0436">Ligase</keyword>
<keyword id="KW-0547">Nucleotide-binding</keyword>
<keyword id="KW-0648">Protein biosynthesis</keyword>
<keyword id="KW-0694">RNA-binding</keyword>
<proteinExistence type="inferred from homology"/>
<accession>B7LQN3</accession>
<evidence type="ECO:0000255" key="1">
    <source>
        <dbReference type="HAMAP-Rule" id="MF_02006"/>
    </source>
</evidence>
<organism>
    <name type="scientific">Escherichia fergusonii (strain ATCC 35469 / DSM 13698 / CCUG 18766 / IAM 14443 / JCM 21226 / LMG 7866 / NBRC 102419 / NCTC 12128 / CDC 0568-73)</name>
    <dbReference type="NCBI Taxonomy" id="585054"/>
    <lineage>
        <taxon>Bacteria</taxon>
        <taxon>Pseudomonadati</taxon>
        <taxon>Pseudomonadota</taxon>
        <taxon>Gammaproteobacteria</taxon>
        <taxon>Enterobacterales</taxon>
        <taxon>Enterobacteriaceae</taxon>
        <taxon>Escherichia</taxon>
    </lineage>
</organism>
<sequence length="424" mass="47486">MASSNLIKQLQERGLVAQVTDEEALAERLAQGPIALYCGFDPTADSLHLGHLVPLLCLKRFQQAGHKPVALVGGATGLIGDPSFKAAERKLNTEETVQEWVDKIRKQVAPFLDFDCGENSAIAANNYDWFGNMNVLTFLRDIGKHFSVNQMINKEAVKQRLNREDQGISFTEFSYNLLQGYDFACLNKLYGVSLQIGGSDQWGNITSGIDLTRRLHQNQVFGLTVPLITKADGTKFGKTEGGAVWLDPKKTSPYKFYQFWINTADADVYRFLKFFTFMSIEEINALEEEDKNSGKAPRAQYVLAEQVTRLVHGEEGLQAAKRITECLFSGSLSALSEADFEQLAQDGVPMVEMEKGADLMQALVDSELQPSRGQARKTIASNAVTINGEKQSDPEYFFKEEDRLFGRFTLLRRGKKNYCLICWK</sequence>